<reference key="1">
    <citation type="journal article" date="2002" name="Proc. Natl. Acad. Sci. U.S.A.">
        <title>Extensive mosaic structure revealed by the complete genome sequence of uropathogenic Escherichia coli.</title>
        <authorList>
            <person name="Welch R.A."/>
            <person name="Burland V."/>
            <person name="Plunkett G. III"/>
            <person name="Redford P."/>
            <person name="Roesch P."/>
            <person name="Rasko D."/>
            <person name="Buckles E.L."/>
            <person name="Liou S.-R."/>
            <person name="Boutin A."/>
            <person name="Hackett J."/>
            <person name="Stroud D."/>
            <person name="Mayhew G.F."/>
            <person name="Rose D.J."/>
            <person name="Zhou S."/>
            <person name="Schwartz D.C."/>
            <person name="Perna N.T."/>
            <person name="Mobley H.L.T."/>
            <person name="Donnenberg M.S."/>
            <person name="Blattner F.R."/>
        </authorList>
    </citation>
    <scope>NUCLEOTIDE SEQUENCE [LARGE SCALE GENOMIC DNA]</scope>
    <source>
        <strain>CFT073 / ATCC 700928 / UPEC</strain>
    </source>
</reference>
<gene>
    <name type="primary">manZ</name>
    <name type="ordered locus">c2226</name>
</gene>
<organism>
    <name type="scientific">Escherichia coli O6:H1 (strain CFT073 / ATCC 700928 / UPEC)</name>
    <dbReference type="NCBI Taxonomy" id="199310"/>
    <lineage>
        <taxon>Bacteria</taxon>
        <taxon>Pseudomonadati</taxon>
        <taxon>Pseudomonadota</taxon>
        <taxon>Gammaproteobacteria</taxon>
        <taxon>Enterobacterales</taxon>
        <taxon>Enterobacteriaceae</taxon>
        <taxon>Escherichia</taxon>
    </lineage>
</organism>
<feature type="chain" id="PRO_0000186651" description="PTS system mannose-specific EIID component">
    <location>
        <begin position="1"/>
        <end position="286"/>
    </location>
</feature>
<feature type="topological domain" description="Cytoplasmic" evidence="1">
    <location>
        <begin position="1"/>
        <end position="17"/>
    </location>
</feature>
<feature type="intramembrane region" evidence="1">
    <location>
        <begin position="18"/>
        <end position="55"/>
    </location>
</feature>
<feature type="topological domain" description="Cytoplasmic" evidence="1">
    <location>
        <begin position="56"/>
        <end position="62"/>
    </location>
</feature>
<feature type="intramembrane region" evidence="1">
    <location>
        <begin position="63"/>
        <end position="95"/>
    </location>
</feature>
<feature type="topological domain" description="Cytoplasmic" evidence="1">
    <location>
        <begin position="96"/>
        <end position="103"/>
    </location>
</feature>
<feature type="transmembrane region" evidence="1">
    <location>
        <begin position="104"/>
        <end position="143"/>
    </location>
</feature>
<feature type="topological domain" description="Periplasmic" evidence="1">
    <location>
        <begin position="144"/>
        <end position="147"/>
    </location>
</feature>
<feature type="transmembrane region" evidence="1">
    <location>
        <begin position="148"/>
        <end position="176"/>
    </location>
</feature>
<feature type="topological domain" description="Cytoplasmic" evidence="1">
    <location>
        <begin position="177"/>
        <end position="186"/>
    </location>
</feature>
<feature type="transmembrane region" evidence="1">
    <location>
        <begin position="187"/>
        <end position="212"/>
    </location>
</feature>
<feature type="topological domain" description="Periplasmic" evidence="1">
    <location>
        <begin position="213"/>
        <end position="244"/>
    </location>
</feature>
<feature type="transmembrane region" evidence="1">
    <location>
        <begin position="245"/>
        <end position="258"/>
    </location>
</feature>
<feature type="topological domain" description="Cytoplasmic" evidence="1">
    <location>
        <begin position="259"/>
        <end position="264"/>
    </location>
</feature>
<feature type="transmembrane region" evidence="1">
    <location>
        <begin position="265"/>
        <end position="283"/>
    </location>
</feature>
<feature type="topological domain" description="Periplasmic" evidence="1">
    <location>
        <begin position="284"/>
        <end position="286"/>
    </location>
</feature>
<feature type="domain" description="PTS EIID" evidence="1">
    <location>
        <begin position="14"/>
        <end position="284"/>
    </location>
</feature>
<feature type="modified residue" description="N-formylmethionine" evidence="1">
    <location>
        <position position="1"/>
    </location>
</feature>
<protein>
    <recommendedName>
        <fullName evidence="1">PTS system mannose-specific EIID component</fullName>
    </recommendedName>
    <alternativeName>
        <fullName evidence="1">EII-M-Man</fullName>
    </alternativeName>
    <alternativeName>
        <fullName evidence="1">EIID-Man</fullName>
    </alternativeName>
    <alternativeName>
        <fullName evidence="1">Mannose permease IID component</fullName>
    </alternativeName>
</protein>
<evidence type="ECO:0000250" key="1">
    <source>
        <dbReference type="UniProtKB" id="P69805"/>
    </source>
</evidence>
<evidence type="ECO:0000255" key="2">
    <source>
        <dbReference type="PROSITE-ProRule" id="PRU00431"/>
    </source>
</evidence>
<comment type="function">
    <text evidence="1">The phosphoenolpyruvate-dependent sugar phosphotransferase system (sugar PTS), a major carbohydrate active transport system, catalyzes the phosphorylation of incoming sugar substrates concomitantly with their translocation across the cell membrane. The enzyme II ManXYZ PTS system is involved in mannose transport.</text>
</comment>
<comment type="subunit">
    <text evidence="1">Homotrimer of protomers that are composed of two subunits, IIC and IID.</text>
</comment>
<comment type="subcellular location">
    <subcellularLocation>
        <location evidence="1">Cell inner membrane</location>
        <topology evidence="1">Multi-pass membrane protein</topology>
    </subcellularLocation>
</comment>
<comment type="domain">
    <text evidence="2">The EIID domain, with its homologous EIIC domain, forms the PTS system translocation channel and contains part of its specific substrate-binding site.</text>
</comment>
<sequence>MSEMVDTTQTTTEKKLTQSDIRGVFLRSNLFQGSWNFERMQALGFCFSMVPAIRRLYPENNEARKQAIRRHLEFFNTQPFVAAPILGVTLALEEQRANGAEIDDGAINGIKVGLMGPLAGVGDPIFWGTVRPVFAALGAGIAMSGSLLGPLLFFILFNLVRLATRYYGVAYGYSKGIDIVKDMGGGFLQKLTEGASILGLFVMGALVNKWTHVNIPLVVSRITDQTGKEHVTTVQTILDQLMPGLVPLLLTFACMWLLRKKVNPLWIIVGFFVIGIAGYACGLLGL</sequence>
<dbReference type="EMBL" id="AE014075">
    <property type="protein sequence ID" value="AAN80685.1"/>
    <property type="molecule type" value="Genomic_DNA"/>
</dbReference>
<dbReference type="SMR" id="P69806"/>
<dbReference type="STRING" id="199310.c2226"/>
<dbReference type="KEGG" id="ecc:c2226"/>
<dbReference type="eggNOG" id="COG3716">
    <property type="taxonomic scope" value="Bacteria"/>
</dbReference>
<dbReference type="HOGENOM" id="CLU_060742_2_0_6"/>
<dbReference type="BioCyc" id="ECOL199310:C2226-MONOMER"/>
<dbReference type="Proteomes" id="UP000001410">
    <property type="component" value="Chromosome"/>
</dbReference>
<dbReference type="GO" id="GO:0005886">
    <property type="term" value="C:plasma membrane"/>
    <property type="evidence" value="ECO:0007669"/>
    <property type="project" value="UniProtKB-SubCell"/>
</dbReference>
<dbReference type="GO" id="GO:0009401">
    <property type="term" value="P:phosphoenolpyruvate-dependent sugar phosphotransferase system"/>
    <property type="evidence" value="ECO:0007669"/>
    <property type="project" value="UniProtKB-KW"/>
</dbReference>
<dbReference type="InterPro" id="IPR050303">
    <property type="entry name" value="GatZ_KbaZ_carbometab"/>
</dbReference>
<dbReference type="InterPro" id="IPR004704">
    <property type="entry name" value="PTS_IID_man"/>
</dbReference>
<dbReference type="NCBIfam" id="TIGR00828">
    <property type="entry name" value="EIID-AGA"/>
    <property type="match status" value="1"/>
</dbReference>
<dbReference type="NCBIfam" id="NF008315">
    <property type="entry name" value="PRK11103.1"/>
    <property type="match status" value="1"/>
</dbReference>
<dbReference type="PANTHER" id="PTHR32502">
    <property type="entry name" value="N-ACETYLGALACTOSAMINE PERMEASE II COMPONENT-RELATED"/>
    <property type="match status" value="1"/>
</dbReference>
<dbReference type="PANTHER" id="PTHR32502:SF5">
    <property type="entry name" value="N-ACETYLGALACTOSAMINE PERMEASE IID COMPONENT-RELATED"/>
    <property type="match status" value="1"/>
</dbReference>
<dbReference type="Pfam" id="PF03613">
    <property type="entry name" value="EIID-AGA"/>
    <property type="match status" value="1"/>
</dbReference>
<dbReference type="PROSITE" id="PS51108">
    <property type="entry name" value="PTS_EIID"/>
    <property type="match status" value="1"/>
</dbReference>
<accession>P69806</accession>
<accession>P08188</accession>
<keyword id="KW-0997">Cell inner membrane</keyword>
<keyword id="KW-1003">Cell membrane</keyword>
<keyword id="KW-0291">Formylation</keyword>
<keyword id="KW-0472">Membrane</keyword>
<keyword id="KW-0598">Phosphotransferase system</keyword>
<keyword id="KW-1185">Reference proteome</keyword>
<keyword id="KW-0762">Sugar transport</keyword>
<keyword id="KW-0812">Transmembrane</keyword>
<keyword id="KW-1133">Transmembrane helix</keyword>
<keyword id="KW-0813">Transport</keyword>
<name>PTND_ECOL6</name>
<proteinExistence type="inferred from homology"/>